<accession>Q6CXH8</accession>
<proteinExistence type="inferred from homology"/>
<protein>
    <recommendedName>
        <fullName>Pre-mRNA-splicing factor RSE1</fullName>
    </recommendedName>
</protein>
<dbReference type="EMBL" id="CR382121">
    <property type="protein sequence ID" value="CAH02949.1"/>
    <property type="molecule type" value="Genomic_DNA"/>
</dbReference>
<dbReference type="RefSeq" id="XP_451361.1">
    <property type="nucleotide sequence ID" value="XM_451361.1"/>
</dbReference>
<dbReference type="SMR" id="Q6CXH8"/>
<dbReference type="FunCoup" id="Q6CXH8">
    <property type="interactions" value="1403"/>
</dbReference>
<dbReference type="STRING" id="284590.Q6CXH8"/>
<dbReference type="PaxDb" id="284590-Q6CXH8"/>
<dbReference type="KEGG" id="kla:KLLA0_A08129g"/>
<dbReference type="eggNOG" id="KOG1898">
    <property type="taxonomic scope" value="Eukaryota"/>
</dbReference>
<dbReference type="HOGENOM" id="CLU_003246_0_0_1"/>
<dbReference type="InParanoid" id="Q6CXH8"/>
<dbReference type="OMA" id="PRATGHW"/>
<dbReference type="Proteomes" id="UP000000598">
    <property type="component" value="Chromosome A"/>
</dbReference>
<dbReference type="GO" id="GO:0005681">
    <property type="term" value="C:spliceosomal complex"/>
    <property type="evidence" value="ECO:0007669"/>
    <property type="project" value="UniProtKB-KW"/>
</dbReference>
<dbReference type="GO" id="GO:0003676">
    <property type="term" value="F:nucleic acid binding"/>
    <property type="evidence" value="ECO:0007669"/>
    <property type="project" value="InterPro"/>
</dbReference>
<dbReference type="GO" id="GO:0006397">
    <property type="term" value="P:mRNA processing"/>
    <property type="evidence" value="ECO:0007669"/>
    <property type="project" value="UniProtKB-KW"/>
</dbReference>
<dbReference type="GO" id="GO:0008380">
    <property type="term" value="P:RNA splicing"/>
    <property type="evidence" value="ECO:0007669"/>
    <property type="project" value="UniProtKB-KW"/>
</dbReference>
<dbReference type="Gene3D" id="2.130.10.10">
    <property type="entry name" value="YVTN repeat-like/Quinoprotein amine dehydrogenase"/>
    <property type="match status" value="2"/>
</dbReference>
<dbReference type="InterPro" id="IPR018846">
    <property type="entry name" value="Beta-prop_RSE1/DDB1/CPSF1_1st"/>
</dbReference>
<dbReference type="InterPro" id="IPR004871">
    <property type="entry name" value="Cleavage/polyA-sp_fac_asu_C"/>
</dbReference>
<dbReference type="InterPro" id="IPR050358">
    <property type="entry name" value="RSE1/DDB1/CFT1/CPSF1"/>
</dbReference>
<dbReference type="InterPro" id="IPR015943">
    <property type="entry name" value="WD40/YVTN_repeat-like_dom_sf"/>
</dbReference>
<dbReference type="InterPro" id="IPR036322">
    <property type="entry name" value="WD40_repeat_dom_sf"/>
</dbReference>
<dbReference type="PANTHER" id="PTHR10644">
    <property type="entry name" value="DNA REPAIR/RNA PROCESSING CPSF FAMILY"/>
    <property type="match status" value="1"/>
</dbReference>
<dbReference type="Pfam" id="PF10433">
    <property type="entry name" value="Beta-prop_RSE1_1st"/>
    <property type="match status" value="1"/>
</dbReference>
<dbReference type="Pfam" id="PF23726">
    <property type="entry name" value="Beta-prop_RSE1_2nd"/>
    <property type="match status" value="1"/>
</dbReference>
<dbReference type="Pfam" id="PF03178">
    <property type="entry name" value="CPSF_A"/>
    <property type="match status" value="1"/>
</dbReference>
<dbReference type="SUPFAM" id="SSF50978">
    <property type="entry name" value="WD40 repeat-like"/>
    <property type="match status" value="1"/>
</dbReference>
<name>RSE1_KLULA</name>
<gene>
    <name type="primary">RSE1</name>
    <name type="ordered locus">KLLA0A08129g</name>
</gene>
<reference key="1">
    <citation type="journal article" date="2004" name="Nature">
        <title>Genome evolution in yeasts.</title>
        <authorList>
            <person name="Dujon B."/>
            <person name="Sherman D."/>
            <person name="Fischer G."/>
            <person name="Durrens P."/>
            <person name="Casaregola S."/>
            <person name="Lafontaine I."/>
            <person name="de Montigny J."/>
            <person name="Marck C."/>
            <person name="Neuveglise C."/>
            <person name="Talla E."/>
            <person name="Goffard N."/>
            <person name="Frangeul L."/>
            <person name="Aigle M."/>
            <person name="Anthouard V."/>
            <person name="Babour A."/>
            <person name="Barbe V."/>
            <person name="Barnay S."/>
            <person name="Blanchin S."/>
            <person name="Beckerich J.-M."/>
            <person name="Beyne E."/>
            <person name="Bleykasten C."/>
            <person name="Boisrame A."/>
            <person name="Boyer J."/>
            <person name="Cattolico L."/>
            <person name="Confanioleri F."/>
            <person name="de Daruvar A."/>
            <person name="Despons L."/>
            <person name="Fabre E."/>
            <person name="Fairhead C."/>
            <person name="Ferry-Dumazet H."/>
            <person name="Groppi A."/>
            <person name="Hantraye F."/>
            <person name="Hennequin C."/>
            <person name="Jauniaux N."/>
            <person name="Joyet P."/>
            <person name="Kachouri R."/>
            <person name="Kerrest A."/>
            <person name="Koszul R."/>
            <person name="Lemaire M."/>
            <person name="Lesur I."/>
            <person name="Ma L."/>
            <person name="Muller H."/>
            <person name="Nicaud J.-M."/>
            <person name="Nikolski M."/>
            <person name="Oztas S."/>
            <person name="Ozier-Kalogeropoulos O."/>
            <person name="Pellenz S."/>
            <person name="Potier S."/>
            <person name="Richard G.-F."/>
            <person name="Straub M.-L."/>
            <person name="Suleau A."/>
            <person name="Swennen D."/>
            <person name="Tekaia F."/>
            <person name="Wesolowski-Louvel M."/>
            <person name="Westhof E."/>
            <person name="Wirth B."/>
            <person name="Zeniou-Meyer M."/>
            <person name="Zivanovic Y."/>
            <person name="Bolotin-Fukuhara M."/>
            <person name="Thierry A."/>
            <person name="Bouchier C."/>
            <person name="Caudron B."/>
            <person name="Scarpelli C."/>
            <person name="Gaillardin C."/>
            <person name="Weissenbach J."/>
            <person name="Wincker P."/>
            <person name="Souciet J.-L."/>
        </authorList>
    </citation>
    <scope>NUCLEOTIDE SEQUENCE [LARGE SCALE GENOMIC DNA]</scope>
    <source>
        <strain>ATCC 8585 / CBS 2359 / DSM 70799 / NBRC 1267 / NRRL Y-1140 / WM37</strain>
    </source>
</reference>
<feature type="chain" id="PRO_0000218632" description="Pre-mRNA-splicing factor RSE1">
    <location>
        <begin position="1"/>
        <end position="1269"/>
    </location>
</feature>
<evidence type="ECO:0000250" key="1"/>
<evidence type="ECO:0000305" key="2"/>
<comment type="function">
    <text evidence="1">Involved in pre-mRNA splicing and cell cycle control.</text>
</comment>
<comment type="subunit">
    <text evidence="1">Associated with the spliceosome.</text>
</comment>
<comment type="subcellular location">
    <subcellularLocation>
        <location evidence="1">Nucleus</location>
    </subcellularLocation>
</comment>
<comment type="similarity">
    <text evidence="2">Belongs to the RSE1 family.</text>
</comment>
<sequence length="1269" mass="142995">MTQDSEVLLWHTVLQRHRNYVHSCIGDFTLDRSSLATAEADTTSVKGPRSSKKRKELQLCLATQDCVELYDVSNGTLDALGKWPIAATILSMTKLNMDRCSHTILVLITDSGNLTFWQFERDSVSGKVYVRTLANEPISRSGIRRFVPQYQMVSDPQSRCVFFSGIERSKMCVLADWQRGKLVVGSPIEIQRSDRITLASAACDVSFDNPVNAAIEVESGTNDYYLSFYTMDLGLNTLLLRKEHLLEDKSINFVMQCPNLQQYKIKTRPNDETDQDSVNPFVICGYDGYLTLIDLEGFYEVSVQLPVRKTVSSTNIINGTIHKLKKDFFILMQSNHGDMYKVGIIPDEETKAPVLEIAYFDTLPTSEDIHIFKSGALFNVSEFGTSYLTQFESLGEDLEKITSYTPGRRSFIETESTLKNLSILDSLTSLNPLTSFHASNSTPLTILAAANQTENLVKLTSAVDFEELISTTLPRIPSKLWTVRIPKNETHSLIFLSMETSTTILKIHEGTVEDFGGDSNPFILNKPSLFVGAMVQRSIIQVTRDCLLQIIEMHDGPYTKKLEWYPPAGVGIVTAFCNETQLVVALTNHEICYFEIIEDSLNELQDRVEMDSTVNSIALLAGQKSGYCVLGCEDSSLQILNLQSKHPDFFTICAIQSLISKPHSLLFMRDTSDLKIHVGMKSGVYLSSKLNINDGTVFDVRTRFVGTKPVQVNLLDNIDINHKDDDDDEPGENDSKIDDFKKKISDFTPLVVLNSSISWVTYEIDDKITLRPLKTDEGITLKHINAFITDDIKRNGCCSITSKGQLLIGKLDNFLSWSNWFNEKKYTLVNDELKNAGNEEEDEDEDEDEDEDASEKYEIVGYQSQRILSDTTDNSLSYVISKTANKETSLSAIRDDKLLATNNGNTVVIIAKEVFNAVCSCNFGTNVKYIVISTESGKFIVIQIRVKNNVLETQYIHETMVHSKVNAMVSFGDKLACCILGNVVLFGLGKKQLLRKSITEMPPYITQVTALDQWDGTMLAVGDIRESVTIFKYDIDNNSFIGVADDIVKRHVTTVKFIDVSSVIGGDRFGNCWVLRVNYESDTRVASNIKACQYTLETLCHMYMNDTPMKFEIVNHMNMSDRPAILWIGLQGTIGCFVPLITRKEQQLYQSFQSTYAELDVLHFQDNNKPEEVDLEETEGALDEAYHTTKNTDHQDYVEGVISRVGRDFLSYRSSYAPSKNIIDGETLEQLTTYLPSDQRWIASKMKHADSGKLDIFNKYINEMRTNYV</sequence>
<organism>
    <name type="scientific">Kluyveromyces lactis (strain ATCC 8585 / CBS 2359 / DSM 70799 / NBRC 1267 / NRRL Y-1140 / WM37)</name>
    <name type="common">Yeast</name>
    <name type="synonym">Candida sphaerica</name>
    <dbReference type="NCBI Taxonomy" id="284590"/>
    <lineage>
        <taxon>Eukaryota</taxon>
        <taxon>Fungi</taxon>
        <taxon>Dikarya</taxon>
        <taxon>Ascomycota</taxon>
        <taxon>Saccharomycotina</taxon>
        <taxon>Saccharomycetes</taxon>
        <taxon>Saccharomycetales</taxon>
        <taxon>Saccharomycetaceae</taxon>
        <taxon>Kluyveromyces</taxon>
    </lineage>
</organism>
<keyword id="KW-0507">mRNA processing</keyword>
<keyword id="KW-0508">mRNA splicing</keyword>
<keyword id="KW-0539">Nucleus</keyword>
<keyword id="KW-1185">Reference proteome</keyword>
<keyword id="KW-0747">Spliceosome</keyword>